<reference key="1">
    <citation type="submission" date="2004-11" db="EMBL/GenBank/DDBJ databases">
        <authorList>
            <consortium name="The German cDNA consortium"/>
        </authorList>
    </citation>
    <scope>NUCLEOTIDE SEQUENCE [LARGE SCALE MRNA]</scope>
    <source>
        <tissue>Kidney</tissue>
    </source>
</reference>
<proteinExistence type="evidence at transcript level"/>
<organism>
    <name type="scientific">Pongo abelii</name>
    <name type="common">Sumatran orangutan</name>
    <name type="synonym">Pongo pygmaeus abelii</name>
    <dbReference type="NCBI Taxonomy" id="9601"/>
    <lineage>
        <taxon>Eukaryota</taxon>
        <taxon>Metazoa</taxon>
        <taxon>Chordata</taxon>
        <taxon>Craniata</taxon>
        <taxon>Vertebrata</taxon>
        <taxon>Euteleostomi</taxon>
        <taxon>Mammalia</taxon>
        <taxon>Eutheria</taxon>
        <taxon>Euarchontoglires</taxon>
        <taxon>Primates</taxon>
        <taxon>Haplorrhini</taxon>
        <taxon>Catarrhini</taxon>
        <taxon>Hominidae</taxon>
        <taxon>Pongo</taxon>
    </lineage>
</organism>
<accession>Q5R5C8</accession>
<gene>
    <name type="primary">CCT7</name>
</gene>
<evidence type="ECO:0000250" key="1">
    <source>
        <dbReference type="UniProtKB" id="P80313"/>
    </source>
</evidence>
<evidence type="ECO:0000250" key="2">
    <source>
        <dbReference type="UniProtKB" id="Q99832"/>
    </source>
</evidence>
<evidence type="ECO:0000305" key="3"/>
<feature type="chain" id="PRO_0000128367" description="T-complex protein 1 subunit eta">
    <location>
        <begin position="1"/>
        <end position="543"/>
    </location>
</feature>
<feature type="binding site" evidence="2">
    <location>
        <position position="41"/>
    </location>
    <ligand>
        <name>ADP</name>
        <dbReference type="ChEBI" id="CHEBI:456216"/>
    </ligand>
</feature>
<feature type="binding site" evidence="2">
    <location>
        <position position="41"/>
    </location>
    <ligand>
        <name>ATP</name>
        <dbReference type="ChEBI" id="CHEBI:30616"/>
    </ligand>
</feature>
<feature type="binding site" evidence="2">
    <location>
        <position position="92"/>
    </location>
    <ligand>
        <name>Mg(2+)</name>
        <dbReference type="ChEBI" id="CHEBI:18420"/>
    </ligand>
</feature>
<feature type="binding site" evidence="2">
    <location>
        <position position="93"/>
    </location>
    <ligand>
        <name>ADP</name>
        <dbReference type="ChEBI" id="CHEBI:456216"/>
    </ligand>
</feature>
<feature type="binding site" evidence="2">
    <location>
        <position position="93"/>
    </location>
    <ligand>
        <name>ATP</name>
        <dbReference type="ChEBI" id="CHEBI:30616"/>
    </ligand>
</feature>
<feature type="binding site" evidence="2">
    <location>
        <position position="94"/>
    </location>
    <ligand>
        <name>ADP</name>
        <dbReference type="ChEBI" id="CHEBI:456216"/>
    </ligand>
</feature>
<feature type="binding site" evidence="2">
    <location>
        <position position="95"/>
    </location>
    <ligand>
        <name>ADP</name>
        <dbReference type="ChEBI" id="CHEBI:456216"/>
    </ligand>
</feature>
<feature type="binding site" evidence="2">
    <location>
        <position position="96"/>
    </location>
    <ligand>
        <name>ADP</name>
        <dbReference type="ChEBI" id="CHEBI:456216"/>
    </ligand>
</feature>
<feature type="binding site" evidence="2">
    <location>
        <position position="96"/>
    </location>
    <ligand>
        <name>ATP</name>
        <dbReference type="ChEBI" id="CHEBI:30616"/>
    </ligand>
</feature>
<feature type="binding site" evidence="2">
    <location>
        <position position="164"/>
    </location>
    <ligand>
        <name>ADP</name>
        <dbReference type="ChEBI" id="CHEBI:456216"/>
    </ligand>
</feature>
<feature type="binding site" evidence="2">
    <location>
        <position position="165"/>
    </location>
    <ligand>
        <name>ADP</name>
        <dbReference type="ChEBI" id="CHEBI:456216"/>
    </ligand>
</feature>
<feature type="binding site" evidence="2">
    <location>
        <position position="398"/>
    </location>
    <ligand>
        <name>ATP</name>
        <dbReference type="ChEBI" id="CHEBI:30616"/>
    </ligand>
</feature>
<feature type="binding site" evidence="2">
    <location>
        <position position="409"/>
    </location>
    <ligand>
        <name>ADP</name>
        <dbReference type="ChEBI" id="CHEBI:456216"/>
    </ligand>
</feature>
<feature type="binding site" evidence="2">
    <location>
        <position position="409"/>
    </location>
    <ligand>
        <name>ATP</name>
        <dbReference type="ChEBI" id="CHEBI:30616"/>
    </ligand>
</feature>
<feature type="binding site" evidence="2">
    <location>
        <position position="494"/>
    </location>
    <ligand>
        <name>ADP</name>
        <dbReference type="ChEBI" id="CHEBI:456216"/>
    </ligand>
</feature>
<feature type="binding site" evidence="2">
    <location>
        <position position="499"/>
    </location>
    <ligand>
        <name>ADP</name>
        <dbReference type="ChEBI" id="CHEBI:456216"/>
    </ligand>
</feature>
<feature type="binding site" evidence="2">
    <location>
        <position position="499"/>
    </location>
    <ligand>
        <name>ATP</name>
        <dbReference type="ChEBI" id="CHEBI:30616"/>
    </ligand>
</feature>
<feature type="modified residue" description="N-acetylmethionine" evidence="2">
    <location>
        <position position="1"/>
    </location>
</feature>
<feature type="modified residue" description="N6-acetyllysine" evidence="2">
    <location>
        <position position="67"/>
    </location>
</feature>
<feature type="modified residue" description="N6-acetyllysine" evidence="1">
    <location>
        <position position="250"/>
    </location>
</feature>
<feature type="modified residue" description="N6-acetyllysine" evidence="2">
    <location>
        <position position="320"/>
    </location>
</feature>
<feature type="modified residue" description="Omega-N-methylarginine" evidence="2">
    <location>
        <position position="535"/>
    </location>
</feature>
<feature type="cross-link" description="Glycyl lysine isopeptide (Lys-Gly) (interchain with G-Cter in SUMO2)" evidence="2">
    <location>
        <position position="430"/>
    </location>
</feature>
<keyword id="KW-0007">Acetylation</keyword>
<keyword id="KW-0067">ATP-binding</keyword>
<keyword id="KW-0143">Chaperone</keyword>
<keyword id="KW-0963">Cytoplasm</keyword>
<keyword id="KW-0378">Hydrolase</keyword>
<keyword id="KW-1017">Isopeptide bond</keyword>
<keyword id="KW-0460">Magnesium</keyword>
<keyword id="KW-0479">Metal-binding</keyword>
<keyword id="KW-0488">Methylation</keyword>
<keyword id="KW-0547">Nucleotide-binding</keyword>
<keyword id="KW-1185">Reference proteome</keyword>
<keyword id="KW-0832">Ubl conjugation</keyword>
<protein>
    <recommendedName>
        <fullName>T-complex protein 1 subunit eta</fullName>
        <shortName>TCP-1-eta</shortName>
        <ecNumber evidence="2">3.6.1.-</ecNumber>
    </recommendedName>
    <alternativeName>
        <fullName>CCT-eta</fullName>
    </alternativeName>
</protein>
<sequence length="543" mass="59323">MMPTPVILLKEGTDSSQGIPQLVSNISACQVIAEAVRTTLGPRGMDKLIVDGRGKATISNDGATILKLLDVVHPAAKTLVDIAKSQDAEVGDGTTSVTLLAAEFLKQVKPYVEEGLHPQIIIRAFRTATQLAVNKIKEIAVTVKKADKVEQRKLLEKCAMTALSSKLISQQKAFFAKMVVDAVMMLDDLLQLKMIGIKKVQGGALEDSQLVAGVAFKKTFSYAGFEMQPKKYHNPKVALLNVELELKAEKDNAEIRVHTVEDYQAIVDAEWNILYDKLEKIHHSGAKVVLSKLPIGDVATQYFADRDMFCAGRVPEEDLKRTMMACGGSIQTSVNALSADVLGRCQVFEETQIGGERYNFFTGCPKAKTCTFILRGGAEQFMEETERSLHDAIMIVRRAIKNDSVVAGGGAIEMELSKYLRDYSRTIPGKQQLLIGAYAKALEIIPRQLCDNAGFDATNILNKLRARHAQGGTWYGVDINNEDIADNFEAFVWEPAMVRINALTAASEAACLIVSVDETIKNPRSTVDAPAAAGRGRGRGRPH</sequence>
<dbReference type="EC" id="3.6.1.-" evidence="2"/>
<dbReference type="EMBL" id="CR860934">
    <property type="protein sequence ID" value="CAH93038.1"/>
    <property type="molecule type" value="mRNA"/>
</dbReference>
<dbReference type="RefSeq" id="NP_001126797.1">
    <property type="nucleotide sequence ID" value="NM_001133325.1"/>
</dbReference>
<dbReference type="SMR" id="Q5R5C8"/>
<dbReference type="FunCoup" id="Q5R5C8">
    <property type="interactions" value="4071"/>
</dbReference>
<dbReference type="STRING" id="9601.ENSPPYP00000013712"/>
<dbReference type="GeneID" id="100173801"/>
<dbReference type="KEGG" id="pon:100173801"/>
<dbReference type="CTD" id="10574"/>
<dbReference type="eggNOG" id="KOG0361">
    <property type="taxonomic scope" value="Eukaryota"/>
</dbReference>
<dbReference type="InParanoid" id="Q5R5C8"/>
<dbReference type="OrthoDB" id="1935484at2759"/>
<dbReference type="Proteomes" id="UP000001595">
    <property type="component" value="Unplaced"/>
</dbReference>
<dbReference type="GO" id="GO:0005832">
    <property type="term" value="C:chaperonin-containing T-complex"/>
    <property type="evidence" value="ECO:0000250"/>
    <property type="project" value="UniProtKB"/>
</dbReference>
<dbReference type="GO" id="GO:0005874">
    <property type="term" value="C:microtubule"/>
    <property type="evidence" value="ECO:0007669"/>
    <property type="project" value="UniProtKB-ARBA"/>
</dbReference>
<dbReference type="GO" id="GO:0005524">
    <property type="term" value="F:ATP binding"/>
    <property type="evidence" value="ECO:0007669"/>
    <property type="project" value="UniProtKB-KW"/>
</dbReference>
<dbReference type="GO" id="GO:0016887">
    <property type="term" value="F:ATP hydrolysis activity"/>
    <property type="evidence" value="ECO:0007669"/>
    <property type="project" value="InterPro"/>
</dbReference>
<dbReference type="GO" id="GO:0140662">
    <property type="term" value="F:ATP-dependent protein folding chaperone"/>
    <property type="evidence" value="ECO:0007669"/>
    <property type="project" value="InterPro"/>
</dbReference>
<dbReference type="GO" id="GO:0051082">
    <property type="term" value="F:unfolded protein binding"/>
    <property type="evidence" value="ECO:0007669"/>
    <property type="project" value="InterPro"/>
</dbReference>
<dbReference type="GO" id="GO:0032212">
    <property type="term" value="P:positive regulation of telomere maintenance via telomerase"/>
    <property type="evidence" value="ECO:0007669"/>
    <property type="project" value="UniProtKB-ARBA"/>
</dbReference>
<dbReference type="GO" id="GO:0050821">
    <property type="term" value="P:protein stabilization"/>
    <property type="evidence" value="ECO:0007669"/>
    <property type="project" value="UniProtKB-ARBA"/>
</dbReference>
<dbReference type="CDD" id="cd03340">
    <property type="entry name" value="TCP1_eta"/>
    <property type="match status" value="1"/>
</dbReference>
<dbReference type="FunFam" id="1.10.560.10:FF:000017">
    <property type="entry name" value="T-complex protein 1 subunit eta"/>
    <property type="match status" value="1"/>
</dbReference>
<dbReference type="FunFam" id="1.10.560.10:FF:000045">
    <property type="entry name" value="T-complex protein 1 subunit eta"/>
    <property type="match status" value="1"/>
</dbReference>
<dbReference type="FunFam" id="3.30.260.10:FF:000022">
    <property type="entry name" value="T-complex protein 1 subunit eta"/>
    <property type="match status" value="1"/>
</dbReference>
<dbReference type="FunFam" id="3.30.260.10:FF:000049">
    <property type="entry name" value="T-complex protein 1 subunit eta"/>
    <property type="match status" value="1"/>
</dbReference>
<dbReference type="FunFam" id="3.50.7.10:FF:000006">
    <property type="entry name" value="T-complex protein 1 subunit eta"/>
    <property type="match status" value="1"/>
</dbReference>
<dbReference type="Gene3D" id="3.50.7.10">
    <property type="entry name" value="GroEL"/>
    <property type="match status" value="1"/>
</dbReference>
<dbReference type="Gene3D" id="1.10.560.10">
    <property type="entry name" value="GroEL-like equatorial domain"/>
    <property type="match status" value="1"/>
</dbReference>
<dbReference type="Gene3D" id="3.30.260.10">
    <property type="entry name" value="TCP-1-like chaperonin intermediate domain"/>
    <property type="match status" value="1"/>
</dbReference>
<dbReference type="InterPro" id="IPR012720">
    <property type="entry name" value="Chap_CCT_eta"/>
</dbReference>
<dbReference type="InterPro" id="IPR017998">
    <property type="entry name" value="Chaperone_TCP-1"/>
</dbReference>
<dbReference type="InterPro" id="IPR002194">
    <property type="entry name" value="Chaperonin_TCP-1_CS"/>
</dbReference>
<dbReference type="InterPro" id="IPR002423">
    <property type="entry name" value="Cpn60/GroEL/TCP-1"/>
</dbReference>
<dbReference type="InterPro" id="IPR027409">
    <property type="entry name" value="GroEL-like_apical_dom_sf"/>
</dbReference>
<dbReference type="InterPro" id="IPR027413">
    <property type="entry name" value="GROEL-like_equatorial_sf"/>
</dbReference>
<dbReference type="InterPro" id="IPR027410">
    <property type="entry name" value="TCP-1-like_intermed_sf"/>
</dbReference>
<dbReference type="InterPro" id="IPR053374">
    <property type="entry name" value="TCP-1_chaperonin"/>
</dbReference>
<dbReference type="InterPro" id="IPR054827">
    <property type="entry name" value="thermosome_alpha"/>
</dbReference>
<dbReference type="NCBIfam" id="TIGR02345">
    <property type="entry name" value="chap_CCT_eta"/>
    <property type="match status" value="1"/>
</dbReference>
<dbReference type="NCBIfam" id="NF041082">
    <property type="entry name" value="thermosome_alpha"/>
    <property type="match status" value="1"/>
</dbReference>
<dbReference type="NCBIfam" id="NF041083">
    <property type="entry name" value="thermosome_beta"/>
    <property type="match status" value="1"/>
</dbReference>
<dbReference type="PANTHER" id="PTHR11353">
    <property type="entry name" value="CHAPERONIN"/>
    <property type="match status" value="1"/>
</dbReference>
<dbReference type="Pfam" id="PF00118">
    <property type="entry name" value="Cpn60_TCP1"/>
    <property type="match status" value="1"/>
</dbReference>
<dbReference type="PRINTS" id="PR00304">
    <property type="entry name" value="TCOMPLEXTCP1"/>
</dbReference>
<dbReference type="SUPFAM" id="SSF52029">
    <property type="entry name" value="GroEL apical domain-like"/>
    <property type="match status" value="1"/>
</dbReference>
<dbReference type="SUPFAM" id="SSF48592">
    <property type="entry name" value="GroEL equatorial domain-like"/>
    <property type="match status" value="1"/>
</dbReference>
<dbReference type="SUPFAM" id="SSF54849">
    <property type="entry name" value="GroEL-intermediate domain like"/>
    <property type="match status" value="1"/>
</dbReference>
<dbReference type="PROSITE" id="PS00750">
    <property type="entry name" value="TCP1_1"/>
    <property type="match status" value="1"/>
</dbReference>
<dbReference type="PROSITE" id="PS00751">
    <property type="entry name" value="TCP1_2"/>
    <property type="match status" value="1"/>
</dbReference>
<dbReference type="PROSITE" id="PS00995">
    <property type="entry name" value="TCP1_3"/>
    <property type="match status" value="1"/>
</dbReference>
<name>TCPH_PONAB</name>
<comment type="function">
    <text evidence="2">Component of the chaperonin-containing T-complex (TRiC), a molecular chaperone complex that assists the folding of actin, tubulin and other proteins upon ATP hydrolysis. The TRiC complex mediates the folding of WRAP53/TCAB1, thereby regulating telomere maintenance.</text>
</comment>
<comment type="catalytic activity">
    <reaction evidence="2">
        <text>ATP + H2O = ADP + phosphate + H(+)</text>
        <dbReference type="Rhea" id="RHEA:13065"/>
        <dbReference type="ChEBI" id="CHEBI:15377"/>
        <dbReference type="ChEBI" id="CHEBI:15378"/>
        <dbReference type="ChEBI" id="CHEBI:30616"/>
        <dbReference type="ChEBI" id="CHEBI:43474"/>
        <dbReference type="ChEBI" id="CHEBI:456216"/>
    </reaction>
</comment>
<comment type="subunit">
    <text evidence="2">Component of the chaperonin-containing T-complex (TRiC), a hexadecamer composed of two identical back-to-back stacked rings enclosing a protein folding chamber. Each ring is made up of eight different subunits: TCP1/CCT1, CCT2, CCT3, CCT4, CCT5, CCT6A/CCT6, CCT7, CCT8. Interacts with PACRG. Interacts with DLEC1.</text>
</comment>
<comment type="subcellular location">
    <subcellularLocation>
        <location evidence="1">Cytoplasm</location>
    </subcellularLocation>
</comment>
<comment type="similarity">
    <text evidence="3">Belongs to the TCP-1 chaperonin family.</text>
</comment>